<sequence length="174" mass="18794">MAPPPPSPPPVSLKVSLLLLRVLTGVFLVIALIILSTNSVTIVSQGSALKFHFKDVYAYRYMLSAAVIGLLYAVIQLFFTISEFATGMKNPFNYQLDFYGDKLISYLVATGSAAGFGVSKDLKDAFIALVALDSTDPVDKFFSRGYASASLLLFSFICLAVLSVFSSLAIAKRN</sequence>
<accession>D7LD59</accession>
<gene>
    <name type="ORF">ARALYDRAFT_903204</name>
</gene>
<protein>
    <recommendedName>
        <fullName>CASP-like protein 4D2</fullName>
        <shortName>AlCASPL4D2</shortName>
    </recommendedName>
</protein>
<reference key="1">
    <citation type="journal article" date="2011" name="Nat. Genet.">
        <title>The Arabidopsis lyrata genome sequence and the basis of rapid genome size change.</title>
        <authorList>
            <person name="Hu T.T."/>
            <person name="Pattyn P."/>
            <person name="Bakker E.G."/>
            <person name="Cao J."/>
            <person name="Cheng J.-F."/>
            <person name="Clark R.M."/>
            <person name="Fahlgren N."/>
            <person name="Fawcett J.A."/>
            <person name="Grimwood J."/>
            <person name="Gundlach H."/>
            <person name="Haberer G."/>
            <person name="Hollister J.D."/>
            <person name="Ossowski S."/>
            <person name="Ottilar R.P."/>
            <person name="Salamov A.A."/>
            <person name="Schneeberger K."/>
            <person name="Spannagl M."/>
            <person name="Wang X."/>
            <person name="Yang L."/>
            <person name="Nasrallah M.E."/>
            <person name="Bergelson J."/>
            <person name="Carrington J.C."/>
            <person name="Gaut B.S."/>
            <person name="Schmutz J."/>
            <person name="Mayer K.F.X."/>
            <person name="Van de Peer Y."/>
            <person name="Grigoriev I.V."/>
            <person name="Nordborg M."/>
            <person name="Weigel D."/>
            <person name="Guo Y.-L."/>
        </authorList>
    </citation>
    <scope>NUCLEOTIDE SEQUENCE [LARGE SCALE GENOMIC DNA]</scope>
    <source>
        <strain>cv. MN47</strain>
    </source>
</reference>
<reference key="2">
    <citation type="journal article" date="2014" name="Plant Physiol.">
        <title>Functional and evolutionary analysis of the CASPARIAN STRIP MEMBRANE DOMAIN PROTEIN family.</title>
        <authorList>
            <person name="Roppolo D."/>
            <person name="Boeckmann B."/>
            <person name="Pfister A."/>
            <person name="Boutet E."/>
            <person name="Rubio M.C."/>
            <person name="Denervaud-Tendon V."/>
            <person name="Vermeer J.E."/>
            <person name="Gheyselinck J."/>
            <person name="Xenarios I."/>
            <person name="Geldner N."/>
        </authorList>
    </citation>
    <scope>GENE FAMILY</scope>
    <scope>NOMENCLATURE</scope>
</reference>
<keyword id="KW-1003">Cell membrane</keyword>
<keyword id="KW-0472">Membrane</keyword>
<keyword id="KW-1185">Reference proteome</keyword>
<keyword id="KW-0812">Transmembrane</keyword>
<keyword id="KW-1133">Transmembrane helix</keyword>
<feature type="chain" id="PRO_0000417761" description="CASP-like protein 4D2">
    <location>
        <begin position="1"/>
        <end position="174"/>
    </location>
</feature>
<feature type="topological domain" description="Cytoplasmic" evidence="2">
    <location>
        <begin position="1"/>
        <end position="14"/>
    </location>
</feature>
<feature type="transmembrane region" description="Helical" evidence="2">
    <location>
        <begin position="15"/>
        <end position="35"/>
    </location>
</feature>
<feature type="topological domain" description="Extracellular" evidence="2">
    <location>
        <begin position="36"/>
        <end position="60"/>
    </location>
</feature>
<feature type="transmembrane region" description="Helical" evidence="2">
    <location>
        <begin position="61"/>
        <end position="81"/>
    </location>
</feature>
<feature type="topological domain" description="Cytoplasmic" evidence="2">
    <location>
        <begin position="82"/>
        <end position="150"/>
    </location>
</feature>
<feature type="transmembrane region" description="Helical" evidence="2">
    <location>
        <begin position="151"/>
        <end position="171"/>
    </location>
</feature>
<feature type="topological domain" description="Extracellular" evidence="2">
    <location>
        <begin position="172"/>
        <end position="174"/>
    </location>
</feature>
<comment type="subunit">
    <text evidence="1">Homodimer and heterodimers.</text>
</comment>
<comment type="subcellular location">
    <subcellularLocation>
        <location evidence="1">Cell membrane</location>
        <topology evidence="1">Multi-pass membrane protein</topology>
    </subcellularLocation>
</comment>
<comment type="similarity">
    <text evidence="3">Belongs to the Casparian strip membrane proteins (CASP) family.</text>
</comment>
<dbReference type="EMBL" id="GL348716">
    <property type="protein sequence ID" value="EFH57920.1"/>
    <property type="molecule type" value="Genomic_DNA"/>
</dbReference>
<dbReference type="RefSeq" id="XP_002881661.1">
    <property type="nucleotide sequence ID" value="XM_002881615.1"/>
</dbReference>
<dbReference type="STRING" id="81972.D7LD59"/>
<dbReference type="EnsemblPlants" id="scaffold_402705.1">
    <property type="protein sequence ID" value="scaffold_402705.1"/>
    <property type="gene ID" value="scaffold_402705.1"/>
</dbReference>
<dbReference type="Gramene" id="scaffold_402705.1">
    <property type="protein sequence ID" value="scaffold_402705.1"/>
    <property type="gene ID" value="scaffold_402705.1"/>
</dbReference>
<dbReference type="KEGG" id="aly:9317727"/>
<dbReference type="eggNOG" id="ENOG502S98H">
    <property type="taxonomic scope" value="Eukaryota"/>
</dbReference>
<dbReference type="HOGENOM" id="CLU_115129_0_0_1"/>
<dbReference type="OrthoDB" id="685197at2759"/>
<dbReference type="Proteomes" id="UP000008694">
    <property type="component" value="Unassembled WGS sequence"/>
</dbReference>
<dbReference type="GO" id="GO:0005886">
    <property type="term" value="C:plasma membrane"/>
    <property type="evidence" value="ECO:0007669"/>
    <property type="project" value="UniProtKB-SubCell"/>
</dbReference>
<dbReference type="InterPro" id="IPR006702">
    <property type="entry name" value="CASP_dom"/>
</dbReference>
<dbReference type="PANTHER" id="PTHR33573">
    <property type="entry name" value="CASP-LIKE PROTEIN 4A4"/>
    <property type="match status" value="1"/>
</dbReference>
<dbReference type="PANTHER" id="PTHR33573:SF40">
    <property type="entry name" value="CASP-LIKE PROTEIN 4D2"/>
    <property type="match status" value="1"/>
</dbReference>
<dbReference type="Pfam" id="PF04535">
    <property type="entry name" value="CASP_dom"/>
    <property type="match status" value="1"/>
</dbReference>
<evidence type="ECO:0000250" key="1"/>
<evidence type="ECO:0000255" key="2"/>
<evidence type="ECO:0000305" key="3"/>
<organism>
    <name type="scientific">Arabidopsis lyrata subsp. lyrata</name>
    <name type="common">Lyre-leaved rock-cress</name>
    <dbReference type="NCBI Taxonomy" id="81972"/>
    <lineage>
        <taxon>Eukaryota</taxon>
        <taxon>Viridiplantae</taxon>
        <taxon>Streptophyta</taxon>
        <taxon>Embryophyta</taxon>
        <taxon>Tracheophyta</taxon>
        <taxon>Spermatophyta</taxon>
        <taxon>Magnoliopsida</taxon>
        <taxon>eudicotyledons</taxon>
        <taxon>Gunneridae</taxon>
        <taxon>Pentapetalae</taxon>
        <taxon>rosids</taxon>
        <taxon>malvids</taxon>
        <taxon>Brassicales</taxon>
        <taxon>Brassicaceae</taxon>
        <taxon>Camelineae</taxon>
        <taxon>Arabidopsis</taxon>
    </lineage>
</organism>
<proteinExistence type="inferred from homology"/>
<name>CSPLL_ARALL</name>